<name>PSD_CLOB1</name>
<proteinExistence type="inferred from homology"/>
<accession>A7FQ59</accession>
<organism>
    <name type="scientific">Clostridium botulinum (strain ATCC 19397 / Type A)</name>
    <dbReference type="NCBI Taxonomy" id="441770"/>
    <lineage>
        <taxon>Bacteria</taxon>
        <taxon>Bacillati</taxon>
        <taxon>Bacillota</taxon>
        <taxon>Clostridia</taxon>
        <taxon>Eubacteriales</taxon>
        <taxon>Clostridiaceae</taxon>
        <taxon>Clostridium</taxon>
    </lineage>
</organism>
<feature type="chain" id="PRO_1000026608" description="Phosphatidylserine decarboxylase beta chain" evidence="1">
    <location>
        <begin position="1"/>
        <end position="255"/>
    </location>
</feature>
<feature type="chain" id="PRO_1000026609" description="Phosphatidylserine decarboxylase alpha chain" evidence="1">
    <location>
        <begin position="256"/>
        <end position="295"/>
    </location>
</feature>
<feature type="active site" description="Charge relay system; for autoendoproteolytic cleavage activity" evidence="1">
    <location>
        <position position="113"/>
    </location>
</feature>
<feature type="active site" description="Charge relay system; for autoendoproteolytic cleavage activity" evidence="1">
    <location>
        <position position="169"/>
    </location>
</feature>
<feature type="active site" description="Charge relay system; for autoendoproteolytic cleavage activity" evidence="1">
    <location>
        <position position="256"/>
    </location>
</feature>
<feature type="active site" description="Schiff-base intermediate with substrate; via pyruvic acid; for decarboxylase activity" evidence="1">
    <location>
        <position position="256"/>
    </location>
</feature>
<feature type="site" description="Cleavage (non-hydrolytic); by autocatalysis" evidence="1">
    <location>
        <begin position="255"/>
        <end position="256"/>
    </location>
</feature>
<feature type="modified residue" description="Pyruvic acid (Ser); by autocatalysis" evidence="1">
    <location>
        <position position="256"/>
    </location>
</feature>
<evidence type="ECO:0000255" key="1">
    <source>
        <dbReference type="HAMAP-Rule" id="MF_00663"/>
    </source>
</evidence>
<gene>
    <name evidence="1" type="primary">psd</name>
    <name type="ordered locus">CLB_0034</name>
</gene>
<dbReference type="EC" id="4.1.1.65" evidence="1"/>
<dbReference type="EMBL" id="CP000726">
    <property type="protein sequence ID" value="ABS33916.1"/>
    <property type="molecule type" value="Genomic_DNA"/>
</dbReference>
<dbReference type="RefSeq" id="WP_011947908.1">
    <property type="nucleotide sequence ID" value="NC_009697.1"/>
</dbReference>
<dbReference type="SMR" id="A7FQ59"/>
<dbReference type="KEGG" id="cba:CLB_0034"/>
<dbReference type="HOGENOM" id="CLU_029061_2_2_9"/>
<dbReference type="UniPathway" id="UPA00558">
    <property type="reaction ID" value="UER00616"/>
</dbReference>
<dbReference type="GO" id="GO:0005886">
    <property type="term" value="C:plasma membrane"/>
    <property type="evidence" value="ECO:0007669"/>
    <property type="project" value="UniProtKB-SubCell"/>
</dbReference>
<dbReference type="GO" id="GO:0004609">
    <property type="term" value="F:phosphatidylserine decarboxylase activity"/>
    <property type="evidence" value="ECO:0007669"/>
    <property type="project" value="UniProtKB-UniRule"/>
</dbReference>
<dbReference type="GO" id="GO:0006646">
    <property type="term" value="P:phosphatidylethanolamine biosynthetic process"/>
    <property type="evidence" value="ECO:0007669"/>
    <property type="project" value="UniProtKB-UniRule"/>
</dbReference>
<dbReference type="HAMAP" id="MF_00663">
    <property type="entry name" value="PS_decarb_PSD_B_type2"/>
    <property type="match status" value="1"/>
</dbReference>
<dbReference type="InterPro" id="IPR003817">
    <property type="entry name" value="PS_Dcarbxylase"/>
</dbReference>
<dbReference type="InterPro" id="IPR033177">
    <property type="entry name" value="PSD-B"/>
</dbReference>
<dbReference type="InterPro" id="IPR033179">
    <property type="entry name" value="PSD_type2_pro"/>
</dbReference>
<dbReference type="NCBIfam" id="NF001941">
    <property type="entry name" value="PRK00723.1"/>
    <property type="match status" value="1"/>
</dbReference>
<dbReference type="NCBIfam" id="TIGR00163">
    <property type="entry name" value="PS_decarb"/>
    <property type="match status" value="1"/>
</dbReference>
<dbReference type="PANTHER" id="PTHR10067">
    <property type="entry name" value="PHOSPHATIDYLSERINE DECARBOXYLASE"/>
    <property type="match status" value="1"/>
</dbReference>
<dbReference type="PANTHER" id="PTHR10067:SF17">
    <property type="entry name" value="PHOSPHATIDYLSERINE DECARBOXYLASE PROENZYME 2"/>
    <property type="match status" value="1"/>
</dbReference>
<dbReference type="Pfam" id="PF02666">
    <property type="entry name" value="PS_Dcarbxylase"/>
    <property type="match status" value="1"/>
</dbReference>
<comment type="function">
    <text evidence="1">Catalyzes the formation of phosphatidylethanolamine (PtdEtn) from phosphatidylserine (PtdSer).</text>
</comment>
<comment type="catalytic activity">
    <reaction evidence="1">
        <text>a 1,2-diacyl-sn-glycero-3-phospho-L-serine + H(+) = a 1,2-diacyl-sn-glycero-3-phosphoethanolamine + CO2</text>
        <dbReference type="Rhea" id="RHEA:20828"/>
        <dbReference type="ChEBI" id="CHEBI:15378"/>
        <dbReference type="ChEBI" id="CHEBI:16526"/>
        <dbReference type="ChEBI" id="CHEBI:57262"/>
        <dbReference type="ChEBI" id="CHEBI:64612"/>
        <dbReference type="EC" id="4.1.1.65"/>
    </reaction>
</comment>
<comment type="cofactor">
    <cofactor evidence="1">
        <name>pyruvate</name>
        <dbReference type="ChEBI" id="CHEBI:15361"/>
    </cofactor>
    <text evidence="1">Binds 1 pyruvoyl group covalently per subunit.</text>
</comment>
<comment type="pathway">
    <text evidence="1">Phospholipid metabolism; phosphatidylethanolamine biosynthesis; phosphatidylethanolamine from CDP-diacylglycerol: step 2/2.</text>
</comment>
<comment type="subunit">
    <text evidence="1">Heterodimer of a large membrane-associated beta subunit and a small pyruvoyl-containing alpha subunit.</text>
</comment>
<comment type="subcellular location">
    <subcellularLocation>
        <location evidence="1">Cell membrane</location>
        <topology evidence="1">Peripheral membrane protein</topology>
    </subcellularLocation>
</comment>
<comment type="PTM">
    <text evidence="1">Is synthesized initially as an inactive proenzyme. Formation of the active enzyme involves a self-maturation process in which the active site pyruvoyl group is generated from an internal serine residue via an autocatalytic post-translational modification. Two non-identical subunits are generated from the proenzyme in this reaction, and the pyruvate is formed at the N-terminus of the alpha chain, which is derived from the carboxyl end of the proenzyme. The autoendoproteolytic cleavage occurs by a canonical serine protease mechanism, in which the side chain hydroxyl group of the serine supplies its oxygen atom to form the C-terminus of the beta chain, while the remainder of the serine residue undergoes an oxidative deamination to produce ammonia and the pyruvoyl prosthetic group on the alpha chain. During this reaction, the Ser that is part of the protease active site of the proenzyme becomes the pyruvoyl prosthetic group, which constitutes an essential element of the active site of the mature decarboxylase.</text>
</comment>
<comment type="similarity">
    <text evidence="1">Belongs to the phosphatidylserine decarboxylase family. PSD-B subfamily. Prokaryotic type II sub-subfamily.</text>
</comment>
<reference key="1">
    <citation type="journal article" date="2007" name="PLoS ONE">
        <title>Analysis of the neurotoxin complex genes in Clostridium botulinum A1-A4 and B1 strains: BoNT/A3, /Ba4 and /B1 clusters are located within plasmids.</title>
        <authorList>
            <person name="Smith T.J."/>
            <person name="Hill K.K."/>
            <person name="Foley B.T."/>
            <person name="Detter J.C."/>
            <person name="Munk A.C."/>
            <person name="Bruce D.C."/>
            <person name="Doggett N.A."/>
            <person name="Smith L.A."/>
            <person name="Marks J.D."/>
            <person name="Xie G."/>
            <person name="Brettin T.S."/>
        </authorList>
    </citation>
    <scope>NUCLEOTIDE SEQUENCE [LARGE SCALE GENOMIC DNA]</scope>
    <source>
        <strain>ATCC 19397 / Type A</strain>
    </source>
</reference>
<keyword id="KW-1003">Cell membrane</keyword>
<keyword id="KW-0210">Decarboxylase</keyword>
<keyword id="KW-0444">Lipid biosynthesis</keyword>
<keyword id="KW-0443">Lipid metabolism</keyword>
<keyword id="KW-0456">Lyase</keyword>
<keyword id="KW-0472">Membrane</keyword>
<keyword id="KW-0594">Phospholipid biosynthesis</keyword>
<keyword id="KW-1208">Phospholipid metabolism</keyword>
<keyword id="KW-0670">Pyruvate</keyword>
<keyword id="KW-0865">Zymogen</keyword>
<protein>
    <recommendedName>
        <fullName evidence="1">Phosphatidylserine decarboxylase proenzyme</fullName>
        <ecNumber evidence="1">4.1.1.65</ecNumber>
    </recommendedName>
    <component>
        <recommendedName>
            <fullName evidence="1">Phosphatidylserine decarboxylase alpha chain</fullName>
        </recommendedName>
    </component>
    <component>
        <recommendedName>
            <fullName evidence="1">Phosphatidylserine decarboxylase beta chain</fullName>
        </recommendedName>
    </component>
</protein>
<sequence length="295" mass="34178">MIKYYNRKNKDYDIEKVAGEKYLNWTYSSPIGMNLLEVFIKKKFFSKIYGFYCDRRLSHKKINKFINDFKIDMSLSENQSSNFKCFNDFFTRKLKKEARPIKTDKNLLISPGDGKILAYENLNLNSVTEVKGINYSFYELINNDSLAKEYDNGTCLVLRLCPTDYHRFHFIDNGICENTIKLKGFYYSVNPIALSKIPSVFCKNKREYSIFHSENFGDIIFMEVGATCVGSIIQTYKPNTKILKGDEKGYFKFGGSTVILFFKKNTIKIDNDILNQSKLGYETSVVMGESIGIKK</sequence>